<name>GATA_BURMA</name>
<accession>Q62MR4</accession>
<comment type="function">
    <text evidence="1">Allows the formation of correctly charged Gln-tRNA(Gln) through the transamidation of misacylated Glu-tRNA(Gln) in organisms which lack glutaminyl-tRNA synthetase. The reaction takes place in the presence of glutamine and ATP through an activated gamma-phospho-Glu-tRNA(Gln).</text>
</comment>
<comment type="catalytic activity">
    <reaction evidence="1">
        <text>L-glutamyl-tRNA(Gln) + L-glutamine + ATP + H2O = L-glutaminyl-tRNA(Gln) + L-glutamate + ADP + phosphate + H(+)</text>
        <dbReference type="Rhea" id="RHEA:17521"/>
        <dbReference type="Rhea" id="RHEA-COMP:9681"/>
        <dbReference type="Rhea" id="RHEA-COMP:9684"/>
        <dbReference type="ChEBI" id="CHEBI:15377"/>
        <dbReference type="ChEBI" id="CHEBI:15378"/>
        <dbReference type="ChEBI" id="CHEBI:29985"/>
        <dbReference type="ChEBI" id="CHEBI:30616"/>
        <dbReference type="ChEBI" id="CHEBI:43474"/>
        <dbReference type="ChEBI" id="CHEBI:58359"/>
        <dbReference type="ChEBI" id="CHEBI:78520"/>
        <dbReference type="ChEBI" id="CHEBI:78521"/>
        <dbReference type="ChEBI" id="CHEBI:456216"/>
        <dbReference type="EC" id="6.3.5.7"/>
    </reaction>
</comment>
<comment type="subunit">
    <text evidence="1">Heterotrimer of A, B and C subunits.</text>
</comment>
<comment type="similarity">
    <text evidence="1">Belongs to the amidase family. GatA subfamily.</text>
</comment>
<dbReference type="EC" id="6.3.5.7" evidence="1"/>
<dbReference type="EMBL" id="CP000010">
    <property type="protein sequence ID" value="AAU48986.1"/>
    <property type="molecule type" value="Genomic_DNA"/>
</dbReference>
<dbReference type="RefSeq" id="WP_004189326.1">
    <property type="nucleotide sequence ID" value="NC_006348.1"/>
</dbReference>
<dbReference type="RefSeq" id="YP_102003.1">
    <property type="nucleotide sequence ID" value="NC_006348.1"/>
</dbReference>
<dbReference type="SMR" id="Q62MR4"/>
<dbReference type="GeneID" id="92977942"/>
<dbReference type="KEGG" id="bma:BMA0164"/>
<dbReference type="PATRIC" id="fig|243160.12.peg.162"/>
<dbReference type="eggNOG" id="COG0154">
    <property type="taxonomic scope" value="Bacteria"/>
</dbReference>
<dbReference type="HOGENOM" id="CLU_009600_0_3_4"/>
<dbReference type="Proteomes" id="UP000006693">
    <property type="component" value="Chromosome 1"/>
</dbReference>
<dbReference type="GO" id="GO:0030956">
    <property type="term" value="C:glutamyl-tRNA(Gln) amidotransferase complex"/>
    <property type="evidence" value="ECO:0007669"/>
    <property type="project" value="InterPro"/>
</dbReference>
<dbReference type="GO" id="GO:0005524">
    <property type="term" value="F:ATP binding"/>
    <property type="evidence" value="ECO:0007669"/>
    <property type="project" value="UniProtKB-KW"/>
</dbReference>
<dbReference type="GO" id="GO:0050567">
    <property type="term" value="F:glutaminyl-tRNA synthase (glutamine-hydrolyzing) activity"/>
    <property type="evidence" value="ECO:0007669"/>
    <property type="project" value="UniProtKB-UniRule"/>
</dbReference>
<dbReference type="GO" id="GO:0006412">
    <property type="term" value="P:translation"/>
    <property type="evidence" value="ECO:0007669"/>
    <property type="project" value="UniProtKB-UniRule"/>
</dbReference>
<dbReference type="Gene3D" id="3.90.1300.10">
    <property type="entry name" value="Amidase signature (AS) domain"/>
    <property type="match status" value="1"/>
</dbReference>
<dbReference type="HAMAP" id="MF_00120">
    <property type="entry name" value="GatA"/>
    <property type="match status" value="1"/>
</dbReference>
<dbReference type="InterPro" id="IPR000120">
    <property type="entry name" value="Amidase"/>
</dbReference>
<dbReference type="InterPro" id="IPR020556">
    <property type="entry name" value="Amidase_CS"/>
</dbReference>
<dbReference type="InterPro" id="IPR023631">
    <property type="entry name" value="Amidase_dom"/>
</dbReference>
<dbReference type="InterPro" id="IPR036928">
    <property type="entry name" value="AS_sf"/>
</dbReference>
<dbReference type="InterPro" id="IPR004412">
    <property type="entry name" value="GatA"/>
</dbReference>
<dbReference type="NCBIfam" id="TIGR00132">
    <property type="entry name" value="gatA"/>
    <property type="match status" value="1"/>
</dbReference>
<dbReference type="PANTHER" id="PTHR11895:SF151">
    <property type="entry name" value="GLUTAMYL-TRNA(GLN) AMIDOTRANSFERASE SUBUNIT A"/>
    <property type="match status" value="1"/>
</dbReference>
<dbReference type="PANTHER" id="PTHR11895">
    <property type="entry name" value="TRANSAMIDASE"/>
    <property type="match status" value="1"/>
</dbReference>
<dbReference type="Pfam" id="PF01425">
    <property type="entry name" value="Amidase"/>
    <property type="match status" value="1"/>
</dbReference>
<dbReference type="SUPFAM" id="SSF75304">
    <property type="entry name" value="Amidase signature (AS) enzymes"/>
    <property type="match status" value="1"/>
</dbReference>
<dbReference type="PROSITE" id="PS00571">
    <property type="entry name" value="AMIDASES"/>
    <property type="match status" value="1"/>
</dbReference>
<organism>
    <name type="scientific">Burkholderia mallei (strain ATCC 23344)</name>
    <dbReference type="NCBI Taxonomy" id="243160"/>
    <lineage>
        <taxon>Bacteria</taxon>
        <taxon>Pseudomonadati</taxon>
        <taxon>Pseudomonadota</taxon>
        <taxon>Betaproteobacteria</taxon>
        <taxon>Burkholderiales</taxon>
        <taxon>Burkholderiaceae</taxon>
        <taxon>Burkholderia</taxon>
        <taxon>pseudomallei group</taxon>
    </lineage>
</organism>
<gene>
    <name evidence="1" type="primary">gatA</name>
    <name type="ordered locus">BMA0164</name>
</gene>
<keyword id="KW-0067">ATP-binding</keyword>
<keyword id="KW-0436">Ligase</keyword>
<keyword id="KW-0547">Nucleotide-binding</keyword>
<keyword id="KW-0648">Protein biosynthesis</keyword>
<keyword id="KW-1185">Reference proteome</keyword>
<feature type="chain" id="PRO_0000241080" description="Glutamyl-tRNA(Gln) amidotransferase subunit A">
    <location>
        <begin position="1"/>
        <end position="496"/>
    </location>
</feature>
<feature type="active site" description="Charge relay system" evidence="1">
    <location>
        <position position="75"/>
    </location>
</feature>
<feature type="active site" description="Charge relay system" evidence="1">
    <location>
        <position position="150"/>
    </location>
</feature>
<feature type="active site" description="Acyl-ester intermediate" evidence="1">
    <location>
        <position position="174"/>
    </location>
</feature>
<evidence type="ECO:0000255" key="1">
    <source>
        <dbReference type="HAMAP-Rule" id="MF_00120"/>
    </source>
</evidence>
<proteinExistence type="inferred from homology"/>
<reference key="1">
    <citation type="journal article" date="2004" name="Proc. Natl. Acad. Sci. U.S.A.">
        <title>Structural flexibility in the Burkholderia mallei genome.</title>
        <authorList>
            <person name="Nierman W.C."/>
            <person name="DeShazer D."/>
            <person name="Kim H.S."/>
            <person name="Tettelin H."/>
            <person name="Nelson K.E."/>
            <person name="Feldblyum T.V."/>
            <person name="Ulrich R.L."/>
            <person name="Ronning C.M."/>
            <person name="Brinkac L.M."/>
            <person name="Daugherty S.C."/>
            <person name="Davidsen T.D."/>
            <person name="DeBoy R.T."/>
            <person name="Dimitrov G."/>
            <person name="Dodson R.J."/>
            <person name="Durkin A.S."/>
            <person name="Gwinn M.L."/>
            <person name="Haft D.H."/>
            <person name="Khouri H.M."/>
            <person name="Kolonay J.F."/>
            <person name="Madupu R."/>
            <person name="Mohammoud Y."/>
            <person name="Nelson W.C."/>
            <person name="Radune D."/>
            <person name="Romero C.M."/>
            <person name="Sarria S."/>
            <person name="Selengut J."/>
            <person name="Shamblin C."/>
            <person name="Sullivan S.A."/>
            <person name="White O."/>
            <person name="Yu Y."/>
            <person name="Zafar N."/>
            <person name="Zhou L."/>
            <person name="Fraser C.M."/>
        </authorList>
    </citation>
    <scope>NUCLEOTIDE SEQUENCE [LARGE SCALE GENOMIC DNA]</scope>
    <source>
        <strain>ATCC 23344</strain>
    </source>
</reference>
<protein>
    <recommendedName>
        <fullName evidence="1">Glutamyl-tRNA(Gln) amidotransferase subunit A</fullName>
        <shortName evidence="1">Glu-ADT subunit A</shortName>
        <ecNumber evidence="1">6.3.5.7</ecNumber>
    </recommendedName>
</protein>
<sequence length="496" mass="52264">MHAKSLTELRAALDAKECSAVELAQHYLKRIDAARDLNAFVHVDAELTLAQAKAADAALANGEAGPLAGLPIVHKDVFVTRGWRSTAGSKMLANYASPFDATVVARLSAAGMVTLGKTNMDEFAMGSSNENSAFGPVKNPWDTSAVPGGSSGGSSAAVAARLAPAATGTDTGGSIRQPASFAGVTGIKPTYGRVSRYGMIAFASSLDQGGPMARSAADCALLLNAMAGFDERDSTSLERADEDYTRHLGKAWAAGGDAGKPLAGLRIGLPAEYFGAGLADDVRAAIDAALKTYEALGATLVPVSLPKTELSIPVYYVIAPAEASSNLSRFDGVRYGHRAAEYRDLLDMYKKSRAEGFGPEVKRRILVGTYVLSHGYYDAYYLQAQKIRRIIAQDFQEAFKSCDVIMGPASPTVAWDIGAKGDDPVQMYLADIYTLSVSLAGLPGMSVPCGFGAGANAKRPVGLQIIGNYFDEARMLQVADAFQRATDWHVQEPAGV</sequence>